<feature type="chain" id="PRO_0000099781" description="Light-harvesting protein B800/830/1020 alpha-1 chain">
    <location>
        <begin position="1"/>
        <end position="52" status="greater than"/>
    </location>
</feature>
<feature type="topological domain" description="Cytoplasmic" evidence="1">
    <location>
        <begin position="1"/>
        <end position="12"/>
    </location>
</feature>
<feature type="transmembrane region" description="Helical" evidence="1">
    <location>
        <begin position="13"/>
        <end position="33"/>
    </location>
</feature>
<feature type="topological domain" description="Periplasmic" evidence="1">
    <location>
        <begin position="34"/>
        <end position="52" status="greater than"/>
    </location>
</feature>
<feature type="binding site" description="axial binding residue" evidence="1">
    <location>
        <position position="29"/>
    </location>
    <ligand>
        <name>a bacteriochlorophyll</name>
        <dbReference type="ChEBI" id="CHEBI:38201"/>
    </ligand>
    <ligandPart>
        <name>Mg</name>
        <dbReference type="ChEBI" id="CHEBI:25107"/>
    </ligandPart>
</feature>
<feature type="non-terminal residue">
    <location>
        <position position="52"/>
    </location>
</feature>
<organism>
    <name type="scientific">Halorhodospira halochloris</name>
    <name type="common">Ectothiorhodospira halochloris</name>
    <dbReference type="NCBI Taxonomy" id="1052"/>
    <lineage>
        <taxon>Bacteria</taxon>
        <taxon>Pseudomonadati</taxon>
        <taxon>Pseudomonadota</taxon>
        <taxon>Gammaproteobacteria</taxon>
        <taxon>Chromatiales</taxon>
        <taxon>Ectothiorhodospiraceae</taxon>
        <taxon>Halorhodospira</taxon>
    </lineage>
</organism>
<accession>P80102</accession>
<evidence type="ECO:0000255" key="1"/>
<evidence type="ECO:0000305" key="2"/>
<dbReference type="PIR" id="S23285">
    <property type="entry name" value="S23285"/>
</dbReference>
<dbReference type="SMR" id="P80102"/>
<dbReference type="GO" id="GO:0019866">
    <property type="term" value="C:organelle inner membrane"/>
    <property type="evidence" value="ECO:0007669"/>
    <property type="project" value="InterPro"/>
</dbReference>
<dbReference type="GO" id="GO:0005886">
    <property type="term" value="C:plasma membrane"/>
    <property type="evidence" value="ECO:0007669"/>
    <property type="project" value="UniProtKB-SubCell"/>
</dbReference>
<dbReference type="GO" id="GO:0030077">
    <property type="term" value="C:plasma membrane light-harvesting complex"/>
    <property type="evidence" value="ECO:0007669"/>
    <property type="project" value="InterPro"/>
</dbReference>
<dbReference type="GO" id="GO:0042314">
    <property type="term" value="F:bacteriochlorophyll binding"/>
    <property type="evidence" value="ECO:0007669"/>
    <property type="project" value="UniProtKB-KW"/>
</dbReference>
<dbReference type="GO" id="GO:0045156">
    <property type="term" value="F:electron transporter, transferring electrons within the cyclic electron transport pathway of photosynthesis activity"/>
    <property type="evidence" value="ECO:0007669"/>
    <property type="project" value="InterPro"/>
</dbReference>
<dbReference type="GO" id="GO:0046872">
    <property type="term" value="F:metal ion binding"/>
    <property type="evidence" value="ECO:0007669"/>
    <property type="project" value="UniProtKB-KW"/>
</dbReference>
<dbReference type="GO" id="GO:0019684">
    <property type="term" value="P:photosynthesis, light reaction"/>
    <property type="evidence" value="ECO:0007669"/>
    <property type="project" value="InterPro"/>
</dbReference>
<dbReference type="Gene3D" id="4.10.220.20">
    <property type="entry name" value="Light-harvesting complex"/>
    <property type="match status" value="1"/>
</dbReference>
<dbReference type="InterPro" id="IPR000066">
    <property type="entry name" value="Antenna_a/b"/>
</dbReference>
<dbReference type="InterPro" id="IPR018332">
    <property type="entry name" value="Antenna_alpha"/>
</dbReference>
<dbReference type="InterPro" id="IPR002361">
    <property type="entry name" value="Antenna_alpha_CS"/>
</dbReference>
<dbReference type="InterPro" id="IPR035889">
    <property type="entry name" value="Light-harvesting_complex"/>
</dbReference>
<dbReference type="NCBIfam" id="NF040861">
    <property type="entry name" value="pufA_517_ASD"/>
    <property type="match status" value="1"/>
</dbReference>
<dbReference type="Pfam" id="PF00556">
    <property type="entry name" value="LHC"/>
    <property type="match status" value="1"/>
</dbReference>
<dbReference type="PRINTS" id="PR00673">
    <property type="entry name" value="LIGHTHARVSTA"/>
</dbReference>
<dbReference type="SUPFAM" id="SSF56918">
    <property type="entry name" value="Light-harvesting complex subunits"/>
    <property type="match status" value="1"/>
</dbReference>
<dbReference type="PROSITE" id="PS00968">
    <property type="entry name" value="ANTENNA_COMP_ALPHA"/>
    <property type="match status" value="1"/>
</dbReference>
<keyword id="KW-0042">Antenna complex</keyword>
<keyword id="KW-0076">Bacteriochlorophyll</keyword>
<keyword id="KW-0997">Cell inner membrane</keyword>
<keyword id="KW-1003">Cell membrane</keyword>
<keyword id="KW-0148">Chlorophyll</keyword>
<keyword id="KW-0157">Chromophore</keyword>
<keyword id="KW-0903">Direct protein sequencing</keyword>
<keyword id="KW-0437">Light-harvesting polypeptide</keyword>
<keyword id="KW-0460">Magnesium</keyword>
<keyword id="KW-0472">Membrane</keyword>
<keyword id="KW-0479">Metal-binding</keyword>
<keyword id="KW-0812">Transmembrane</keyword>
<keyword id="KW-1133">Transmembrane helix</keyword>
<reference key="1">
    <citation type="journal article" date="1992" name="Eur. J. Biochem.">
        <title>The primary structure of the antenna polypeptides of Ectothiorhodospira halochloris and Ectothiorhodospira halophila. Four core-type antenna polypeptides in E. halochloris and E. halophila.</title>
        <authorList>
            <person name="Wagner-Huber R."/>
            <person name="Brunisholz R.A."/>
            <person name="Bissig I."/>
            <person name="Frank G."/>
            <person name="Suter F."/>
            <person name="Zuber H."/>
        </authorList>
    </citation>
    <scope>PROTEIN SEQUENCE</scope>
    <source>
        <strain>ATCC 35916 / DSM 1059 / BN 9850 / A</strain>
    </source>
</reference>
<sequence length="52" mass="6191">MWRIWKVFDPRRILIATAIWLIIIALTIHVILMTTERFNWLEGAPAAEYYSS</sequence>
<name>LHA1_HALHR</name>
<comment type="function">
    <text>Antenna complexes are light-harvesting systems, which transfer the excitation energy to the reaction centers.</text>
</comment>
<comment type="subunit">
    <text>The core complex is formed by different alpha and beta chains, binding bacteriochlorophyll molecules, and arranged most probably in tetrameric structures disposed around the reaction center. The non-pigmented gamma chains may constitute additional components.</text>
</comment>
<comment type="subcellular location">
    <subcellularLocation>
        <location>Cell inner membrane</location>
        <topology>Single-pass type II membrane protein</topology>
    </subcellularLocation>
</comment>
<comment type="similarity">
    <text evidence="2">Belongs to the antenna complex alpha subunit family.</text>
</comment>
<protein>
    <recommendedName>
        <fullName>Light-harvesting protein B800/830/1020 alpha-1 chain</fullName>
    </recommendedName>
    <alternativeName>
        <fullName>Antenna pigment protein alpha-1 chain</fullName>
    </alternativeName>
    <alternativeName>
        <fullName>EHS-alpha-1</fullName>
    </alternativeName>
</protein>
<proteinExistence type="evidence at protein level"/>